<accession>Q8ECD7</accession>
<dbReference type="EC" id="3.1.1.61" evidence="1"/>
<dbReference type="EC" id="3.5.1.44" evidence="1"/>
<dbReference type="EMBL" id="AE014299">
    <property type="protein sequence ID" value="AAN56205.1"/>
    <property type="molecule type" value="Genomic_DNA"/>
</dbReference>
<dbReference type="RefSeq" id="NP_718761.1">
    <property type="nucleotide sequence ID" value="NC_004347.2"/>
</dbReference>
<dbReference type="RefSeq" id="WP_011073092.1">
    <property type="nucleotide sequence ID" value="NC_004347.2"/>
</dbReference>
<dbReference type="SMR" id="Q8ECD7"/>
<dbReference type="STRING" id="211586.SO_3206"/>
<dbReference type="PaxDb" id="211586-SO_3206"/>
<dbReference type="KEGG" id="son:SO_3206"/>
<dbReference type="PATRIC" id="fig|211586.12.peg.3112"/>
<dbReference type="eggNOG" id="COG2201">
    <property type="taxonomic scope" value="Bacteria"/>
</dbReference>
<dbReference type="HOGENOM" id="CLU_000445_51_0_6"/>
<dbReference type="OrthoDB" id="9793421at2"/>
<dbReference type="PhylomeDB" id="Q8ECD7"/>
<dbReference type="BioCyc" id="SONE211586:G1GMP-2986-MONOMER"/>
<dbReference type="Proteomes" id="UP000008186">
    <property type="component" value="Chromosome"/>
</dbReference>
<dbReference type="GO" id="GO:0005737">
    <property type="term" value="C:cytoplasm"/>
    <property type="evidence" value="ECO:0007669"/>
    <property type="project" value="UniProtKB-SubCell"/>
</dbReference>
<dbReference type="GO" id="GO:0000156">
    <property type="term" value="F:phosphorelay response regulator activity"/>
    <property type="evidence" value="ECO:0007669"/>
    <property type="project" value="InterPro"/>
</dbReference>
<dbReference type="GO" id="GO:0008984">
    <property type="term" value="F:protein-glutamate methylesterase activity"/>
    <property type="evidence" value="ECO:0007669"/>
    <property type="project" value="UniProtKB-UniRule"/>
</dbReference>
<dbReference type="GO" id="GO:0050568">
    <property type="term" value="F:protein-glutamine glutaminase activity"/>
    <property type="evidence" value="ECO:0007669"/>
    <property type="project" value="UniProtKB-UniRule"/>
</dbReference>
<dbReference type="GO" id="GO:0006935">
    <property type="term" value="P:chemotaxis"/>
    <property type="evidence" value="ECO:0007669"/>
    <property type="project" value="UniProtKB-UniRule"/>
</dbReference>
<dbReference type="CDD" id="cd16432">
    <property type="entry name" value="CheB_Rec"/>
    <property type="match status" value="1"/>
</dbReference>
<dbReference type="CDD" id="cd17541">
    <property type="entry name" value="REC_CheB-like"/>
    <property type="match status" value="1"/>
</dbReference>
<dbReference type="FunFam" id="3.40.50.2300:FF:000077">
    <property type="entry name" value="Chemotaxis response regulator"/>
    <property type="match status" value="1"/>
</dbReference>
<dbReference type="FunFam" id="3.40.50.180:FF:000001">
    <property type="entry name" value="Protein-glutamate methylesterase/protein-glutamine glutaminase"/>
    <property type="match status" value="1"/>
</dbReference>
<dbReference type="Gene3D" id="3.40.50.2300">
    <property type="match status" value="1"/>
</dbReference>
<dbReference type="Gene3D" id="3.40.50.180">
    <property type="entry name" value="Methylesterase CheB, C-terminal domain"/>
    <property type="match status" value="1"/>
</dbReference>
<dbReference type="HAMAP" id="MF_00099">
    <property type="entry name" value="CheB_chemtxs"/>
    <property type="match status" value="1"/>
</dbReference>
<dbReference type="InterPro" id="IPR008248">
    <property type="entry name" value="CheB-like"/>
</dbReference>
<dbReference type="InterPro" id="IPR035909">
    <property type="entry name" value="CheB_C"/>
</dbReference>
<dbReference type="InterPro" id="IPR011006">
    <property type="entry name" value="CheY-like_superfamily"/>
</dbReference>
<dbReference type="InterPro" id="IPR000673">
    <property type="entry name" value="Sig_transdc_resp-reg_Me-estase"/>
</dbReference>
<dbReference type="InterPro" id="IPR001789">
    <property type="entry name" value="Sig_transdc_resp-reg_receiver"/>
</dbReference>
<dbReference type="NCBIfam" id="NF001965">
    <property type="entry name" value="PRK00742.1"/>
    <property type="match status" value="1"/>
</dbReference>
<dbReference type="PANTHER" id="PTHR42872">
    <property type="entry name" value="PROTEIN-GLUTAMATE METHYLESTERASE/PROTEIN-GLUTAMINE GLUTAMINASE"/>
    <property type="match status" value="1"/>
</dbReference>
<dbReference type="PANTHER" id="PTHR42872:SF3">
    <property type="entry name" value="PROTEIN-GLUTAMATE METHYLESTERASE_PROTEIN-GLUTAMINE GLUTAMINASE 1"/>
    <property type="match status" value="1"/>
</dbReference>
<dbReference type="Pfam" id="PF01339">
    <property type="entry name" value="CheB_methylest"/>
    <property type="match status" value="1"/>
</dbReference>
<dbReference type="Pfam" id="PF00072">
    <property type="entry name" value="Response_reg"/>
    <property type="match status" value="1"/>
</dbReference>
<dbReference type="PIRSF" id="PIRSF000876">
    <property type="entry name" value="RR_chemtxs_CheB"/>
    <property type="match status" value="1"/>
</dbReference>
<dbReference type="SMART" id="SM00448">
    <property type="entry name" value="REC"/>
    <property type="match status" value="1"/>
</dbReference>
<dbReference type="SUPFAM" id="SSF52172">
    <property type="entry name" value="CheY-like"/>
    <property type="match status" value="1"/>
</dbReference>
<dbReference type="SUPFAM" id="SSF52738">
    <property type="entry name" value="Methylesterase CheB, C-terminal domain"/>
    <property type="match status" value="1"/>
</dbReference>
<dbReference type="PROSITE" id="PS50122">
    <property type="entry name" value="CHEB"/>
    <property type="match status" value="1"/>
</dbReference>
<dbReference type="PROSITE" id="PS50110">
    <property type="entry name" value="RESPONSE_REGULATORY"/>
    <property type="match status" value="1"/>
</dbReference>
<proteinExistence type="inferred from homology"/>
<comment type="function">
    <text evidence="1">Involved in chemotaxis. Part of a chemotaxis signal transduction system that modulates chemotaxis in response to various stimuli. Catalyzes the demethylation of specific methylglutamate residues introduced into the chemoreceptors (methyl-accepting chemotaxis proteins or MCP) by CheR. Also mediates the irreversible deamidation of specific glutamine residues to glutamic acid.</text>
</comment>
<comment type="catalytic activity">
    <reaction evidence="1">
        <text>[protein]-L-glutamate 5-O-methyl ester + H2O = L-glutamyl-[protein] + methanol + H(+)</text>
        <dbReference type="Rhea" id="RHEA:23236"/>
        <dbReference type="Rhea" id="RHEA-COMP:10208"/>
        <dbReference type="Rhea" id="RHEA-COMP:10311"/>
        <dbReference type="ChEBI" id="CHEBI:15377"/>
        <dbReference type="ChEBI" id="CHEBI:15378"/>
        <dbReference type="ChEBI" id="CHEBI:17790"/>
        <dbReference type="ChEBI" id="CHEBI:29973"/>
        <dbReference type="ChEBI" id="CHEBI:82795"/>
        <dbReference type="EC" id="3.1.1.61"/>
    </reaction>
</comment>
<comment type="catalytic activity">
    <reaction evidence="1">
        <text>L-glutaminyl-[protein] + H2O = L-glutamyl-[protein] + NH4(+)</text>
        <dbReference type="Rhea" id="RHEA:16441"/>
        <dbReference type="Rhea" id="RHEA-COMP:10207"/>
        <dbReference type="Rhea" id="RHEA-COMP:10208"/>
        <dbReference type="ChEBI" id="CHEBI:15377"/>
        <dbReference type="ChEBI" id="CHEBI:28938"/>
        <dbReference type="ChEBI" id="CHEBI:29973"/>
        <dbReference type="ChEBI" id="CHEBI:30011"/>
        <dbReference type="EC" id="3.5.1.44"/>
    </reaction>
</comment>
<comment type="subcellular location">
    <subcellularLocation>
        <location evidence="1">Cytoplasm</location>
    </subcellularLocation>
</comment>
<comment type="domain">
    <text evidence="1">Contains a C-terminal catalytic domain, and an N-terminal region which modulates catalytic activity.</text>
</comment>
<comment type="PTM">
    <text evidence="1">Phosphorylated by CheA. Phosphorylation of the N-terminal regulatory domain activates the methylesterase activity.</text>
</comment>
<comment type="similarity">
    <text evidence="1">Belongs to the CheB family.</text>
</comment>
<protein>
    <recommendedName>
        <fullName evidence="1">Protein-glutamate methylesterase/protein-glutamine glutaminase 1</fullName>
        <ecNumber evidence="1">3.1.1.61</ecNumber>
        <ecNumber evidence="1">3.5.1.44</ecNumber>
    </recommendedName>
</protein>
<gene>
    <name evidence="1" type="primary">cheB1</name>
    <name type="ordered locus">SO_3206</name>
</gene>
<name>CHEB1_SHEON</name>
<feature type="chain" id="PRO_0000158028" description="Protein-glutamate methylesterase/protein-glutamine glutaminase 1">
    <location>
        <begin position="1"/>
        <end position="374"/>
    </location>
</feature>
<feature type="domain" description="Response regulatory" evidence="1">
    <location>
        <begin position="4"/>
        <end position="121"/>
    </location>
</feature>
<feature type="domain" description="CheB-type methylesterase" evidence="1">
    <location>
        <begin position="174"/>
        <end position="374"/>
    </location>
</feature>
<feature type="region of interest" description="Disordered" evidence="2">
    <location>
        <begin position="141"/>
        <end position="170"/>
    </location>
</feature>
<feature type="compositionally biased region" description="Polar residues" evidence="2">
    <location>
        <begin position="149"/>
        <end position="167"/>
    </location>
</feature>
<feature type="active site" evidence="1">
    <location>
        <position position="193"/>
    </location>
</feature>
<feature type="active site" evidence="1">
    <location>
        <position position="220"/>
    </location>
</feature>
<feature type="active site" evidence="1">
    <location>
        <position position="316"/>
    </location>
</feature>
<feature type="modified residue" description="4-aspartylphosphate" evidence="1">
    <location>
        <position position="55"/>
    </location>
</feature>
<organism>
    <name type="scientific">Shewanella oneidensis (strain ATCC 700550 / JCM 31522 / CIP 106686 / LMG 19005 / NCIMB 14063 / MR-1)</name>
    <dbReference type="NCBI Taxonomy" id="211586"/>
    <lineage>
        <taxon>Bacteria</taxon>
        <taxon>Pseudomonadati</taxon>
        <taxon>Pseudomonadota</taxon>
        <taxon>Gammaproteobacteria</taxon>
        <taxon>Alteromonadales</taxon>
        <taxon>Shewanellaceae</taxon>
        <taxon>Shewanella</taxon>
    </lineage>
</organism>
<sequence>MAIKVLVVDDSSFFRRRVSEIVNQDPELEVIATASNGAEAVKMTADLNPQVITMDIEMPVMDGITAVREIMAKCPTPILMFSSLTHDGAKATLDALDAGALDFLPKRFEDIATNKDEAILLLQQRVKALGRRRIFRPITRPSVAPVTPRPTTGSAVGNATTPVQSASAPVRSSPLSSIRASGKQYKLLLIGTSTGGPVALQKVLTQFPANYPHPILLIQHMPAAFTPAFASRLNGLCKIEVKEAANGDILRPGCAYLAPGGMQMMVERAGVTGRIKVLAGSAEMNYKPCVDITFASASKAYGGDVLAVVLTGMGADGREGARMLKAAGATIWAQDEASCVVYGMPQAVASTGIATQSISLDNMAESILKESARG</sequence>
<keyword id="KW-0145">Chemotaxis</keyword>
<keyword id="KW-0963">Cytoplasm</keyword>
<keyword id="KW-0378">Hydrolase</keyword>
<keyword id="KW-0597">Phosphoprotein</keyword>
<keyword id="KW-1185">Reference proteome</keyword>
<evidence type="ECO:0000255" key="1">
    <source>
        <dbReference type="HAMAP-Rule" id="MF_00099"/>
    </source>
</evidence>
<evidence type="ECO:0000256" key="2">
    <source>
        <dbReference type="SAM" id="MobiDB-lite"/>
    </source>
</evidence>
<reference key="1">
    <citation type="journal article" date="2002" name="Nat. Biotechnol.">
        <title>Genome sequence of the dissimilatory metal ion-reducing bacterium Shewanella oneidensis.</title>
        <authorList>
            <person name="Heidelberg J.F."/>
            <person name="Paulsen I.T."/>
            <person name="Nelson K.E."/>
            <person name="Gaidos E.J."/>
            <person name="Nelson W.C."/>
            <person name="Read T.D."/>
            <person name="Eisen J.A."/>
            <person name="Seshadri R."/>
            <person name="Ward N.L."/>
            <person name="Methe B.A."/>
            <person name="Clayton R.A."/>
            <person name="Meyer T."/>
            <person name="Tsapin A."/>
            <person name="Scott J."/>
            <person name="Beanan M.J."/>
            <person name="Brinkac L.M."/>
            <person name="Daugherty S.C."/>
            <person name="DeBoy R.T."/>
            <person name="Dodson R.J."/>
            <person name="Durkin A.S."/>
            <person name="Haft D.H."/>
            <person name="Kolonay J.F."/>
            <person name="Madupu R."/>
            <person name="Peterson J.D."/>
            <person name="Umayam L.A."/>
            <person name="White O."/>
            <person name="Wolf A.M."/>
            <person name="Vamathevan J.J."/>
            <person name="Weidman J.F."/>
            <person name="Impraim M."/>
            <person name="Lee K."/>
            <person name="Berry K.J."/>
            <person name="Lee C."/>
            <person name="Mueller J."/>
            <person name="Khouri H.M."/>
            <person name="Gill J."/>
            <person name="Utterback T.R."/>
            <person name="McDonald L.A."/>
            <person name="Feldblyum T.V."/>
            <person name="Smith H.O."/>
            <person name="Venter J.C."/>
            <person name="Nealson K.H."/>
            <person name="Fraser C.M."/>
        </authorList>
    </citation>
    <scope>NUCLEOTIDE SEQUENCE [LARGE SCALE GENOMIC DNA]</scope>
    <source>
        <strain>ATCC 700550 / JCM 31522 / CIP 106686 / LMG 19005 / NCIMB 14063 / MR-1</strain>
    </source>
</reference>